<sequence length="441" mass="50306">MRIGLFTDTYFPQVSGVATSIRTLKTELEKQGHAVFIFTTTDKDVNRYEDWQIIRIPSVPFFAFKDRRFAYRGFSKALEIAKQYQLDIIHTQTEFSLGLLGIWIARELKIPVIHTYHTQYEDYVHYIAKGMLIRPSMVKYLVRGFLHDVDGVICPSEIVRDLLSDYKVKVEKRVIPTGIELAKFERPEIKQENLKELRSKLGIQDGEKTLLSLSRISYEKNIQAVLVAFADVLKEEDKVKLVVAGDGPYLNDLKEQAQNLEIQDSVIFTGMIAPSETALYYKAADFFISASTSETQGLTYLESLASGTPVIAHGNPYLNNLISDKMFGALYYGEHDLAGAILEALIATPDMNEHTLSEKLYEISAENFGKRVHEFYLDAIISNNFQKDLAKDDTVSQRIFKTVLYLPQQVVAVPVKGSRRMLKASKTQLISMRDYWKDHEE</sequence>
<reference key="1">
    <citation type="journal article" date="2001" name="J. Bacteriol.">
        <title>Genome of the bacterium Streptococcus pneumoniae strain R6.</title>
        <authorList>
            <person name="Hoskins J."/>
            <person name="Alborn W.E. Jr."/>
            <person name="Arnold J."/>
            <person name="Blaszczak L.C."/>
            <person name="Burgett S."/>
            <person name="DeHoff B.S."/>
            <person name="Estrem S.T."/>
            <person name="Fritz L."/>
            <person name="Fu D.-J."/>
            <person name="Fuller W."/>
            <person name="Geringer C."/>
            <person name="Gilmour R."/>
            <person name="Glass J.S."/>
            <person name="Khoja H."/>
            <person name="Kraft A.R."/>
            <person name="Lagace R.E."/>
            <person name="LeBlanc D.J."/>
            <person name="Lee L.N."/>
            <person name="Lefkowitz E.J."/>
            <person name="Lu J."/>
            <person name="Matsushima P."/>
            <person name="McAhren S.M."/>
            <person name="McHenney M."/>
            <person name="McLeaster K."/>
            <person name="Mundy C.W."/>
            <person name="Nicas T.I."/>
            <person name="Norris F.H."/>
            <person name="O'Gara M."/>
            <person name="Peery R.B."/>
            <person name="Robertson G.T."/>
            <person name="Rockey P."/>
            <person name="Sun P.-M."/>
            <person name="Winkler M.E."/>
            <person name="Yang Y."/>
            <person name="Young-Bellido M."/>
            <person name="Zhao G."/>
            <person name="Zook C.A."/>
            <person name="Baltz R.H."/>
            <person name="Jaskunas S.R."/>
            <person name="Rosteck P.R. Jr."/>
            <person name="Skatrud P.L."/>
            <person name="Glass J.I."/>
        </authorList>
    </citation>
    <scope>NUCLEOTIDE SEQUENCE [LARGE SCALE GENOMIC DNA]</scope>
    <source>
        <strain>ATCC BAA-255 / R6</strain>
    </source>
</reference>
<reference key="2">
    <citation type="journal article" date="2001" name="J. Biol. Chem.">
        <title>Sequence properties of the 1,2-diacylglycerol 3-glucosyltransferase from Acholeplasma laidlawii membranes. Recognition of a large group of lipid glycosyltransferases in eubacteria and archaea.</title>
        <authorList>
            <person name="Berg S."/>
            <person name="Edman M."/>
            <person name="Li L."/>
            <person name="Wikstrom M."/>
            <person name="Wieslander A."/>
        </authorList>
    </citation>
    <scope>FUNCTION</scope>
    <scope>CATALYTIC ACTIVITY</scope>
    <scope>ACTIVITY REGULATION</scope>
    <source>
        <strain>CCUG 3030</strain>
    </source>
</reference>
<keyword id="KW-0119">Carbohydrate metabolism</keyword>
<keyword id="KW-1003">Cell membrane</keyword>
<keyword id="KW-0319">Glycerol metabolism</keyword>
<keyword id="KW-0328">Glycosyltransferase</keyword>
<keyword id="KW-0444">Lipid biosynthesis</keyword>
<keyword id="KW-0443">Lipid metabolism</keyword>
<keyword id="KW-0460">Magnesium</keyword>
<keyword id="KW-0472">Membrane</keyword>
<keyword id="KW-1185">Reference proteome</keyword>
<keyword id="KW-0808">Transferase</keyword>
<gene>
    <name type="ordered locus">spr0982</name>
</gene>
<accession>Q8CWR6</accession>
<dbReference type="EC" id="2.4.1.337" evidence="2"/>
<dbReference type="EMBL" id="AE007317">
    <property type="protein sequence ID" value="AAK99786.1"/>
    <property type="molecule type" value="Genomic_DNA"/>
</dbReference>
<dbReference type="PIR" id="F97994">
    <property type="entry name" value="F97994"/>
</dbReference>
<dbReference type="RefSeq" id="NP_358576.1">
    <property type="nucleotide sequence ID" value="NC_003098.1"/>
</dbReference>
<dbReference type="RefSeq" id="WP_001219432.1">
    <property type="nucleotide sequence ID" value="NC_003098.1"/>
</dbReference>
<dbReference type="SMR" id="Q8CWR6"/>
<dbReference type="STRING" id="171101.spr0982"/>
<dbReference type="CAZy" id="GT4">
    <property type="family name" value="Glycosyltransferase Family 4"/>
</dbReference>
<dbReference type="KEGG" id="spr:spr0982"/>
<dbReference type="PATRIC" id="fig|171101.6.peg.1068"/>
<dbReference type="eggNOG" id="COG0438">
    <property type="taxonomic scope" value="Bacteria"/>
</dbReference>
<dbReference type="HOGENOM" id="CLU_009583_2_0_9"/>
<dbReference type="BioCyc" id="MetaCyc:MONOMER-20028"/>
<dbReference type="Proteomes" id="UP000000586">
    <property type="component" value="Chromosome"/>
</dbReference>
<dbReference type="GO" id="GO:0005886">
    <property type="term" value="C:plasma membrane"/>
    <property type="evidence" value="ECO:0007669"/>
    <property type="project" value="UniProtKB-SubCell"/>
</dbReference>
<dbReference type="GO" id="GO:0047228">
    <property type="term" value="F:1,2-diacylglycerol 3-glucosyltransferase activity"/>
    <property type="evidence" value="ECO:0007669"/>
    <property type="project" value="UniProtKB-EC"/>
</dbReference>
<dbReference type="GO" id="GO:0016758">
    <property type="term" value="F:hexosyltransferase activity"/>
    <property type="evidence" value="ECO:0000314"/>
    <property type="project" value="UniProtKB"/>
</dbReference>
<dbReference type="GO" id="GO:0000287">
    <property type="term" value="F:magnesium ion binding"/>
    <property type="evidence" value="ECO:0000250"/>
    <property type="project" value="UniProtKB"/>
</dbReference>
<dbReference type="GO" id="GO:0006071">
    <property type="term" value="P:glycerol metabolic process"/>
    <property type="evidence" value="ECO:0007669"/>
    <property type="project" value="UniProtKB-KW"/>
</dbReference>
<dbReference type="GO" id="GO:0046467">
    <property type="term" value="P:membrane lipid biosynthetic process"/>
    <property type="evidence" value="ECO:0000314"/>
    <property type="project" value="UniProtKB"/>
</dbReference>
<dbReference type="CDD" id="cd03817">
    <property type="entry name" value="GT4_UGDG-like"/>
    <property type="match status" value="1"/>
</dbReference>
<dbReference type="FunFam" id="3.40.50.2000:FF:000136">
    <property type="entry name" value="Glycosyl transferase, group 1"/>
    <property type="match status" value="1"/>
</dbReference>
<dbReference type="FunFam" id="3.40.50.2000:FF:000184">
    <property type="entry name" value="Glycosyl transferase, group 1"/>
    <property type="match status" value="1"/>
</dbReference>
<dbReference type="Gene3D" id="3.40.50.2000">
    <property type="entry name" value="Glycogen Phosphorylase B"/>
    <property type="match status" value="2"/>
</dbReference>
<dbReference type="InterPro" id="IPR001296">
    <property type="entry name" value="Glyco_trans_1"/>
</dbReference>
<dbReference type="InterPro" id="IPR028098">
    <property type="entry name" value="Glyco_trans_4-like_N"/>
</dbReference>
<dbReference type="InterPro" id="IPR050194">
    <property type="entry name" value="Glycosyltransferase_grp1"/>
</dbReference>
<dbReference type="PANTHER" id="PTHR45947">
    <property type="entry name" value="SULFOQUINOVOSYL TRANSFERASE SQD2"/>
    <property type="match status" value="1"/>
</dbReference>
<dbReference type="PANTHER" id="PTHR45947:SF3">
    <property type="entry name" value="SULFOQUINOVOSYL TRANSFERASE SQD2"/>
    <property type="match status" value="1"/>
</dbReference>
<dbReference type="Pfam" id="PF13439">
    <property type="entry name" value="Glyco_transf_4"/>
    <property type="match status" value="1"/>
</dbReference>
<dbReference type="Pfam" id="PF00534">
    <property type="entry name" value="Glycos_transf_1"/>
    <property type="match status" value="1"/>
</dbReference>
<dbReference type="SUPFAM" id="SSF53756">
    <property type="entry name" value="UDP-Glycosyltransferase/glycogen phosphorylase"/>
    <property type="match status" value="1"/>
</dbReference>
<protein>
    <recommendedName>
        <fullName>Alpha-monoglucosyldiacylglycerol synthase</fullName>
        <shortName>Alpha-MGS</shortName>
        <shortName>MGlcDAG synthase</shortName>
        <ecNumber evidence="2">2.4.1.337</ecNumber>
    </recommendedName>
    <alternativeName>
        <fullName>1,2-Diacylglycerol 3-glucosyltransferase</fullName>
    </alternativeName>
    <alternativeName>
        <fullName>UDP-glucose:1,2-diacylglycerol 3-alpha-D-glucosyltransferase</fullName>
    </alternativeName>
</protein>
<organism>
    <name type="scientific">Streptococcus pneumoniae (strain ATCC BAA-255 / R6)</name>
    <dbReference type="NCBI Taxonomy" id="171101"/>
    <lineage>
        <taxon>Bacteria</taxon>
        <taxon>Bacillati</taxon>
        <taxon>Bacillota</taxon>
        <taxon>Bacilli</taxon>
        <taxon>Lactobacillales</taxon>
        <taxon>Streptococcaceae</taxon>
        <taxon>Streptococcus</taxon>
    </lineage>
</organism>
<evidence type="ECO:0000250" key="1"/>
<evidence type="ECO:0000269" key="2">
    <source>
    </source>
</evidence>
<evidence type="ECO:0000305" key="3"/>
<feature type="chain" id="PRO_0000425273" description="Alpha-monoglucosyldiacylglycerol synthase">
    <location>
        <begin position="1"/>
        <end position="441"/>
    </location>
</feature>
<name>AMGDS_STRR6</name>
<comment type="function">
    <text evidence="2">Glucosyltransferase involved in the biosynthesis of the non-bilayer-prone membrane lipid alpha-monoglucosyldiacylglycerol. This is a major component for maintaining a certain anionic lipid surface charge density, for balancing the bilayer to non-bilayer phase equilibria and for keeping a constant lipid bilayer spontaneous curvature (curvature packing stress). Catalyzes the transfer of a glucosyl residue from UDP-Glc to diacylglycerol (DAG) acceptor to form the corresponding alpha-glucosyl-DAG (1,2-diacyl-3-O-(alpha-D-glucopyranosyl)-sn-glycerol). It can only use UDP-Glc as sugar donor.</text>
</comment>
<comment type="catalytic activity">
    <reaction evidence="2">
        <text>a 1,2-diacyl-sn-glycerol + UDP-alpha-D-glucose = a 1,2-diacyl-3-O-(alpha-D-glucopyranosyl)-sn-glycerol + UDP + H(+)</text>
        <dbReference type="Rhea" id="RHEA:47612"/>
        <dbReference type="ChEBI" id="CHEBI:15378"/>
        <dbReference type="ChEBI" id="CHEBI:17670"/>
        <dbReference type="ChEBI" id="CHEBI:17815"/>
        <dbReference type="ChEBI" id="CHEBI:58223"/>
        <dbReference type="ChEBI" id="CHEBI:58885"/>
        <dbReference type="EC" id="2.4.1.337"/>
    </reaction>
</comment>
<comment type="cofactor">
    <cofactor evidence="1">
        <name>Mg(2+)</name>
        <dbReference type="ChEBI" id="CHEBI:18420"/>
    </cofactor>
</comment>
<comment type="activity regulation">
    <text evidence="2">Activated by the negatively charged lipid phosphatidylglycerol (PG).</text>
</comment>
<comment type="subcellular location">
    <subcellularLocation>
        <location evidence="1">Cell membrane</location>
    </subcellularLocation>
</comment>
<comment type="similarity">
    <text evidence="3">Belongs to the glycosyltransferase group 1 family. Glycosyltransferase 4 subfamily.</text>
</comment>
<proteinExistence type="evidence at protein level"/>